<organism>
    <name type="scientific">Nostoc sp. (strain PCC 7120 / SAG 25.82 / UTEX 2576)</name>
    <dbReference type="NCBI Taxonomy" id="103690"/>
    <lineage>
        <taxon>Bacteria</taxon>
        <taxon>Bacillati</taxon>
        <taxon>Cyanobacteriota</taxon>
        <taxon>Cyanophyceae</taxon>
        <taxon>Nostocales</taxon>
        <taxon>Nostocaceae</taxon>
        <taxon>Nostoc</taxon>
    </lineage>
</organism>
<comment type="similarity">
    <text evidence="2">Belongs to the bacterial ribosomal protein bS21 family.</text>
</comment>
<gene>
    <name type="primary">rpsU2</name>
    <name type="synonym">rps21</name>
    <name type="ordered locus">asr0843</name>
</gene>
<dbReference type="EMBL" id="BA000019">
    <property type="protein sequence ID" value="BAB72800.1"/>
    <property type="molecule type" value="Genomic_DNA"/>
</dbReference>
<dbReference type="PIR" id="AI1911">
    <property type="entry name" value="AI1911"/>
</dbReference>
<dbReference type="SMR" id="Q8YYK5"/>
<dbReference type="STRING" id="103690.gene:10492855"/>
<dbReference type="KEGG" id="ana:asr0843"/>
<dbReference type="eggNOG" id="COG0828">
    <property type="taxonomic scope" value="Bacteria"/>
</dbReference>
<dbReference type="OrthoDB" id="9799244at2"/>
<dbReference type="Proteomes" id="UP000002483">
    <property type="component" value="Chromosome"/>
</dbReference>
<dbReference type="GO" id="GO:1990904">
    <property type="term" value="C:ribonucleoprotein complex"/>
    <property type="evidence" value="ECO:0007669"/>
    <property type="project" value="UniProtKB-KW"/>
</dbReference>
<dbReference type="GO" id="GO:0005840">
    <property type="term" value="C:ribosome"/>
    <property type="evidence" value="ECO:0007669"/>
    <property type="project" value="UniProtKB-KW"/>
</dbReference>
<dbReference type="GO" id="GO:0003735">
    <property type="term" value="F:structural constituent of ribosome"/>
    <property type="evidence" value="ECO:0007669"/>
    <property type="project" value="InterPro"/>
</dbReference>
<dbReference type="GO" id="GO:0006412">
    <property type="term" value="P:translation"/>
    <property type="evidence" value="ECO:0007669"/>
    <property type="project" value="UniProtKB-UniRule"/>
</dbReference>
<dbReference type="Gene3D" id="1.20.5.1150">
    <property type="entry name" value="Ribosomal protein S8"/>
    <property type="match status" value="1"/>
</dbReference>
<dbReference type="HAMAP" id="MF_00358">
    <property type="entry name" value="Ribosomal_bS21"/>
    <property type="match status" value="1"/>
</dbReference>
<dbReference type="InterPro" id="IPR001911">
    <property type="entry name" value="Ribosomal_bS21"/>
</dbReference>
<dbReference type="InterPro" id="IPR018278">
    <property type="entry name" value="Ribosomal_bS21_CS"/>
</dbReference>
<dbReference type="InterPro" id="IPR038380">
    <property type="entry name" value="Ribosomal_bS21_sf"/>
</dbReference>
<dbReference type="NCBIfam" id="TIGR00030">
    <property type="entry name" value="S21p"/>
    <property type="match status" value="1"/>
</dbReference>
<dbReference type="PANTHER" id="PTHR21109">
    <property type="entry name" value="MITOCHONDRIAL 28S RIBOSOMAL PROTEIN S21"/>
    <property type="match status" value="1"/>
</dbReference>
<dbReference type="PANTHER" id="PTHR21109:SF0">
    <property type="entry name" value="SMALL RIBOSOMAL SUBUNIT PROTEIN BS21M"/>
    <property type="match status" value="1"/>
</dbReference>
<dbReference type="Pfam" id="PF01165">
    <property type="entry name" value="Ribosomal_S21"/>
    <property type="match status" value="1"/>
</dbReference>
<dbReference type="PRINTS" id="PR00976">
    <property type="entry name" value="RIBOSOMALS21"/>
</dbReference>
<dbReference type="PROSITE" id="PS01181">
    <property type="entry name" value="RIBOSOMAL_S21"/>
    <property type="match status" value="1"/>
</dbReference>
<keyword id="KW-1185">Reference proteome</keyword>
<keyword id="KW-0687">Ribonucleoprotein</keyword>
<keyword id="KW-0689">Ribosomal protein</keyword>
<accession>Q8YYK5</accession>
<proteinExistence type="inferred from homology"/>
<protein>
    <recommendedName>
        <fullName evidence="1">Small ribosomal subunit protein bS21B</fullName>
    </recommendedName>
    <alternativeName>
        <fullName evidence="2">30S ribosomal protein S21 2</fullName>
    </alternativeName>
</protein>
<reference key="1">
    <citation type="journal article" date="2001" name="DNA Res.">
        <title>Complete genomic sequence of the filamentous nitrogen-fixing cyanobacterium Anabaena sp. strain PCC 7120.</title>
        <authorList>
            <person name="Kaneko T."/>
            <person name="Nakamura Y."/>
            <person name="Wolk C.P."/>
            <person name="Kuritz T."/>
            <person name="Sasamoto S."/>
            <person name="Watanabe A."/>
            <person name="Iriguchi M."/>
            <person name="Ishikawa A."/>
            <person name="Kawashima K."/>
            <person name="Kimura T."/>
            <person name="Kishida Y."/>
            <person name="Kohara M."/>
            <person name="Matsumoto M."/>
            <person name="Matsuno A."/>
            <person name="Muraki A."/>
            <person name="Nakazaki N."/>
            <person name="Shimpo S."/>
            <person name="Sugimoto M."/>
            <person name="Takazawa M."/>
            <person name="Yamada M."/>
            <person name="Yasuda M."/>
            <person name="Tabata S."/>
        </authorList>
    </citation>
    <scope>NUCLEOTIDE SEQUENCE [LARGE SCALE GENOMIC DNA]</scope>
    <source>
        <strain>PCC 7120 / SAG 25.82 / UTEX 2576</strain>
    </source>
</reference>
<feature type="chain" id="PRO_0000178288" description="Small ribosomal subunit protein bS21B">
    <location>
        <begin position="1"/>
        <end position="58"/>
    </location>
</feature>
<sequence length="58" mass="6901">MTQVVLGEHEGIDSALRRFKRQVSKAGILADVKYHRHFETPLERRKRKAVAARRKRRF</sequence>
<name>RS21B_NOSS1</name>
<evidence type="ECO:0000255" key="1">
    <source>
        <dbReference type="HAMAP-Rule" id="MF_00358"/>
    </source>
</evidence>
<evidence type="ECO:0000305" key="2"/>